<keyword id="KW-0687">Ribonucleoprotein</keyword>
<keyword id="KW-0689">Ribosomal protein</keyword>
<keyword id="KW-0694">RNA-binding</keyword>
<keyword id="KW-0699">rRNA-binding</keyword>
<accession>B2TII9</accession>
<evidence type="ECO:0000255" key="1">
    <source>
        <dbReference type="HAMAP-Rule" id="MF_01302"/>
    </source>
</evidence>
<evidence type="ECO:0000305" key="2"/>
<protein>
    <recommendedName>
        <fullName evidence="1">Small ribosomal subunit protein uS8</fullName>
    </recommendedName>
    <alternativeName>
        <fullName evidence="2">30S ribosomal protein S8</fullName>
    </alternativeName>
</protein>
<feature type="chain" id="PRO_1000140535" description="Small ribosomal subunit protein uS8">
    <location>
        <begin position="1"/>
        <end position="132"/>
    </location>
</feature>
<proteinExistence type="inferred from homology"/>
<reference key="1">
    <citation type="submission" date="2008-04" db="EMBL/GenBank/DDBJ databases">
        <title>Complete sequence of Clostridium botulinum strain Eklund.</title>
        <authorList>
            <person name="Brinkac L.M."/>
            <person name="Brown J.L."/>
            <person name="Bruce D."/>
            <person name="Detter C."/>
            <person name="Munk C."/>
            <person name="Smith L.A."/>
            <person name="Smith T.J."/>
            <person name="Sutton G."/>
            <person name="Brettin T.S."/>
        </authorList>
    </citation>
    <scope>NUCLEOTIDE SEQUENCE [LARGE SCALE GENOMIC DNA]</scope>
    <source>
        <strain>Eklund 17B / Type B</strain>
    </source>
</reference>
<gene>
    <name evidence="1" type="primary">rpsH</name>
    <name type="ordered locus">CLL_A0252</name>
</gene>
<name>RS8_CLOBB</name>
<sequence length="132" mass="14564">MVMTDPIADLLTRVRNANAVKHEVVEVPSSNVKKAITNILLQEGYIKNIEEYNDGVVPMLRISLKYGANNERVITGIKRISKPGLRVYCKKDEVPKVLNGLGVAVISTSKGLVVDREARKDGLGGEVLCYVW</sequence>
<organism>
    <name type="scientific">Clostridium botulinum (strain Eklund 17B / Type B)</name>
    <dbReference type="NCBI Taxonomy" id="935198"/>
    <lineage>
        <taxon>Bacteria</taxon>
        <taxon>Bacillati</taxon>
        <taxon>Bacillota</taxon>
        <taxon>Clostridia</taxon>
        <taxon>Eubacteriales</taxon>
        <taxon>Clostridiaceae</taxon>
        <taxon>Clostridium</taxon>
    </lineage>
</organism>
<dbReference type="EMBL" id="CP001056">
    <property type="protein sequence ID" value="ACD24464.1"/>
    <property type="molecule type" value="Genomic_DNA"/>
</dbReference>
<dbReference type="SMR" id="B2TII9"/>
<dbReference type="KEGG" id="cbk:CLL_A0252"/>
<dbReference type="PATRIC" id="fig|935198.13.peg.227"/>
<dbReference type="HOGENOM" id="CLU_098428_0_2_9"/>
<dbReference type="Proteomes" id="UP000001195">
    <property type="component" value="Chromosome"/>
</dbReference>
<dbReference type="GO" id="GO:1990904">
    <property type="term" value="C:ribonucleoprotein complex"/>
    <property type="evidence" value="ECO:0007669"/>
    <property type="project" value="UniProtKB-KW"/>
</dbReference>
<dbReference type="GO" id="GO:0005840">
    <property type="term" value="C:ribosome"/>
    <property type="evidence" value="ECO:0007669"/>
    <property type="project" value="UniProtKB-KW"/>
</dbReference>
<dbReference type="GO" id="GO:0019843">
    <property type="term" value="F:rRNA binding"/>
    <property type="evidence" value="ECO:0007669"/>
    <property type="project" value="UniProtKB-UniRule"/>
</dbReference>
<dbReference type="GO" id="GO:0003735">
    <property type="term" value="F:structural constituent of ribosome"/>
    <property type="evidence" value="ECO:0007669"/>
    <property type="project" value="InterPro"/>
</dbReference>
<dbReference type="GO" id="GO:0006412">
    <property type="term" value="P:translation"/>
    <property type="evidence" value="ECO:0007669"/>
    <property type="project" value="UniProtKB-UniRule"/>
</dbReference>
<dbReference type="FunFam" id="3.30.1370.30:FF:000002">
    <property type="entry name" value="30S ribosomal protein S8"/>
    <property type="match status" value="1"/>
</dbReference>
<dbReference type="FunFam" id="3.30.1490.10:FF:000001">
    <property type="entry name" value="30S ribosomal protein S8"/>
    <property type="match status" value="1"/>
</dbReference>
<dbReference type="Gene3D" id="3.30.1370.30">
    <property type="match status" value="1"/>
</dbReference>
<dbReference type="Gene3D" id="3.30.1490.10">
    <property type="match status" value="1"/>
</dbReference>
<dbReference type="HAMAP" id="MF_01302_B">
    <property type="entry name" value="Ribosomal_uS8_B"/>
    <property type="match status" value="1"/>
</dbReference>
<dbReference type="InterPro" id="IPR000630">
    <property type="entry name" value="Ribosomal_uS8"/>
</dbReference>
<dbReference type="InterPro" id="IPR047863">
    <property type="entry name" value="Ribosomal_uS8_CS"/>
</dbReference>
<dbReference type="InterPro" id="IPR035987">
    <property type="entry name" value="Ribosomal_uS8_sf"/>
</dbReference>
<dbReference type="NCBIfam" id="NF001109">
    <property type="entry name" value="PRK00136.1"/>
    <property type="match status" value="1"/>
</dbReference>
<dbReference type="PANTHER" id="PTHR11758">
    <property type="entry name" value="40S RIBOSOMAL PROTEIN S15A"/>
    <property type="match status" value="1"/>
</dbReference>
<dbReference type="Pfam" id="PF00410">
    <property type="entry name" value="Ribosomal_S8"/>
    <property type="match status" value="1"/>
</dbReference>
<dbReference type="SUPFAM" id="SSF56047">
    <property type="entry name" value="Ribosomal protein S8"/>
    <property type="match status" value="1"/>
</dbReference>
<dbReference type="PROSITE" id="PS00053">
    <property type="entry name" value="RIBOSOMAL_S8"/>
    <property type="match status" value="1"/>
</dbReference>
<comment type="function">
    <text evidence="1">One of the primary rRNA binding proteins, it binds directly to 16S rRNA central domain where it helps coordinate assembly of the platform of the 30S subunit.</text>
</comment>
<comment type="subunit">
    <text evidence="1">Part of the 30S ribosomal subunit. Contacts proteins S5 and S12.</text>
</comment>
<comment type="similarity">
    <text evidence="1">Belongs to the universal ribosomal protein uS8 family.</text>
</comment>